<gene>
    <name evidence="1" type="primary">deoB</name>
    <name type="ordered locus">BCE33L3844</name>
</gene>
<reference key="1">
    <citation type="journal article" date="2006" name="J. Bacteriol.">
        <title>Pathogenomic sequence analysis of Bacillus cereus and Bacillus thuringiensis isolates closely related to Bacillus anthracis.</title>
        <authorList>
            <person name="Han C.S."/>
            <person name="Xie G."/>
            <person name="Challacombe J.F."/>
            <person name="Altherr M.R."/>
            <person name="Bhotika S.S."/>
            <person name="Bruce D."/>
            <person name="Campbell C.S."/>
            <person name="Campbell M.L."/>
            <person name="Chen J."/>
            <person name="Chertkov O."/>
            <person name="Cleland C."/>
            <person name="Dimitrijevic M."/>
            <person name="Doggett N.A."/>
            <person name="Fawcett J.J."/>
            <person name="Glavina T."/>
            <person name="Goodwin L.A."/>
            <person name="Hill K.K."/>
            <person name="Hitchcock P."/>
            <person name="Jackson P.J."/>
            <person name="Keim P."/>
            <person name="Kewalramani A.R."/>
            <person name="Longmire J."/>
            <person name="Lucas S."/>
            <person name="Malfatti S."/>
            <person name="McMurry K."/>
            <person name="Meincke L.J."/>
            <person name="Misra M."/>
            <person name="Moseman B.L."/>
            <person name="Mundt M."/>
            <person name="Munk A.C."/>
            <person name="Okinaka R.T."/>
            <person name="Parson-Quintana B."/>
            <person name="Reilly L.P."/>
            <person name="Richardson P."/>
            <person name="Robinson D.L."/>
            <person name="Rubin E."/>
            <person name="Saunders E."/>
            <person name="Tapia R."/>
            <person name="Tesmer J.G."/>
            <person name="Thayer N."/>
            <person name="Thompson L.S."/>
            <person name="Tice H."/>
            <person name="Ticknor L.O."/>
            <person name="Wills P.L."/>
            <person name="Brettin T.S."/>
            <person name="Gilna P."/>
        </authorList>
    </citation>
    <scope>NUCLEOTIDE SEQUENCE [LARGE SCALE GENOMIC DNA]</scope>
    <source>
        <strain>ZK / E33L</strain>
    </source>
</reference>
<evidence type="ECO:0000255" key="1">
    <source>
        <dbReference type="HAMAP-Rule" id="MF_00740"/>
    </source>
</evidence>
<keyword id="KW-0963">Cytoplasm</keyword>
<keyword id="KW-0413">Isomerase</keyword>
<keyword id="KW-0464">Manganese</keyword>
<keyword id="KW-0479">Metal-binding</keyword>
<name>DEOB_BACCZ</name>
<accession>Q635J3</accession>
<feature type="chain" id="PRO_0000258272" description="Phosphopentomutase">
    <location>
        <begin position="1"/>
        <end position="394"/>
    </location>
</feature>
<feature type="binding site" evidence="1">
    <location>
        <position position="13"/>
    </location>
    <ligand>
        <name>Mn(2+)</name>
        <dbReference type="ChEBI" id="CHEBI:29035"/>
        <label>1</label>
    </ligand>
</feature>
<feature type="binding site" evidence="1">
    <location>
        <position position="286"/>
    </location>
    <ligand>
        <name>Mn(2+)</name>
        <dbReference type="ChEBI" id="CHEBI:29035"/>
        <label>2</label>
    </ligand>
</feature>
<feature type="binding site" evidence="1">
    <location>
        <position position="291"/>
    </location>
    <ligand>
        <name>Mn(2+)</name>
        <dbReference type="ChEBI" id="CHEBI:29035"/>
        <label>2</label>
    </ligand>
</feature>
<feature type="binding site" evidence="1">
    <location>
        <position position="327"/>
    </location>
    <ligand>
        <name>Mn(2+)</name>
        <dbReference type="ChEBI" id="CHEBI:29035"/>
        <label>1</label>
    </ligand>
</feature>
<feature type="binding site" evidence="1">
    <location>
        <position position="328"/>
    </location>
    <ligand>
        <name>Mn(2+)</name>
        <dbReference type="ChEBI" id="CHEBI:29035"/>
        <label>1</label>
    </ligand>
</feature>
<feature type="binding site" evidence="1">
    <location>
        <position position="339"/>
    </location>
    <ligand>
        <name>Mn(2+)</name>
        <dbReference type="ChEBI" id="CHEBI:29035"/>
        <label>2</label>
    </ligand>
</feature>
<protein>
    <recommendedName>
        <fullName evidence="1">Phosphopentomutase</fullName>
        <ecNumber evidence="1">5.4.2.7</ecNumber>
    </recommendedName>
    <alternativeName>
        <fullName evidence="1">Phosphodeoxyribomutase</fullName>
    </alternativeName>
</protein>
<dbReference type="EC" id="5.4.2.7" evidence="1"/>
<dbReference type="EMBL" id="CP000001">
    <property type="protein sequence ID" value="AAU16424.1"/>
    <property type="molecule type" value="Genomic_DNA"/>
</dbReference>
<dbReference type="RefSeq" id="WP_001046083.1">
    <property type="nucleotide sequence ID" value="NZ_CP009968.1"/>
</dbReference>
<dbReference type="SMR" id="Q635J3"/>
<dbReference type="KEGG" id="bcz:BCE33L3844"/>
<dbReference type="PATRIC" id="fig|288681.22.peg.1557"/>
<dbReference type="UniPathway" id="UPA00002">
    <property type="reaction ID" value="UER00467"/>
</dbReference>
<dbReference type="Proteomes" id="UP000002612">
    <property type="component" value="Chromosome"/>
</dbReference>
<dbReference type="GO" id="GO:0005829">
    <property type="term" value="C:cytosol"/>
    <property type="evidence" value="ECO:0007669"/>
    <property type="project" value="TreeGrafter"/>
</dbReference>
<dbReference type="GO" id="GO:0000287">
    <property type="term" value="F:magnesium ion binding"/>
    <property type="evidence" value="ECO:0007669"/>
    <property type="project" value="InterPro"/>
</dbReference>
<dbReference type="GO" id="GO:0030145">
    <property type="term" value="F:manganese ion binding"/>
    <property type="evidence" value="ECO:0007669"/>
    <property type="project" value="UniProtKB-UniRule"/>
</dbReference>
<dbReference type="GO" id="GO:0008973">
    <property type="term" value="F:phosphopentomutase activity"/>
    <property type="evidence" value="ECO:0007669"/>
    <property type="project" value="UniProtKB-UniRule"/>
</dbReference>
<dbReference type="GO" id="GO:0006018">
    <property type="term" value="P:2-deoxyribose 1-phosphate catabolic process"/>
    <property type="evidence" value="ECO:0007669"/>
    <property type="project" value="UniProtKB-UniRule"/>
</dbReference>
<dbReference type="GO" id="GO:0006015">
    <property type="term" value="P:5-phosphoribose 1-diphosphate biosynthetic process"/>
    <property type="evidence" value="ECO:0007669"/>
    <property type="project" value="UniProtKB-UniPathway"/>
</dbReference>
<dbReference type="GO" id="GO:0043094">
    <property type="term" value="P:metabolic compound salvage"/>
    <property type="evidence" value="ECO:0007669"/>
    <property type="project" value="InterPro"/>
</dbReference>
<dbReference type="GO" id="GO:0009117">
    <property type="term" value="P:nucleotide metabolic process"/>
    <property type="evidence" value="ECO:0007669"/>
    <property type="project" value="InterPro"/>
</dbReference>
<dbReference type="CDD" id="cd16009">
    <property type="entry name" value="PPM"/>
    <property type="match status" value="1"/>
</dbReference>
<dbReference type="FunFam" id="3.30.70.1250:FF:000001">
    <property type="entry name" value="Phosphopentomutase"/>
    <property type="match status" value="1"/>
</dbReference>
<dbReference type="Gene3D" id="3.40.720.10">
    <property type="entry name" value="Alkaline Phosphatase, subunit A"/>
    <property type="match status" value="1"/>
</dbReference>
<dbReference type="Gene3D" id="3.30.70.1250">
    <property type="entry name" value="Phosphopentomutase"/>
    <property type="match status" value="1"/>
</dbReference>
<dbReference type="HAMAP" id="MF_00740">
    <property type="entry name" value="Phosphopentomut"/>
    <property type="match status" value="1"/>
</dbReference>
<dbReference type="InterPro" id="IPR017850">
    <property type="entry name" value="Alkaline_phosphatase_core_sf"/>
</dbReference>
<dbReference type="InterPro" id="IPR010045">
    <property type="entry name" value="DeoB"/>
</dbReference>
<dbReference type="InterPro" id="IPR006124">
    <property type="entry name" value="Metalloenzyme"/>
</dbReference>
<dbReference type="InterPro" id="IPR024052">
    <property type="entry name" value="Phosphopentomutase_DeoB_cap_sf"/>
</dbReference>
<dbReference type="NCBIfam" id="TIGR01696">
    <property type="entry name" value="deoB"/>
    <property type="match status" value="1"/>
</dbReference>
<dbReference type="NCBIfam" id="NF003766">
    <property type="entry name" value="PRK05362.1"/>
    <property type="match status" value="1"/>
</dbReference>
<dbReference type="PANTHER" id="PTHR21110">
    <property type="entry name" value="PHOSPHOPENTOMUTASE"/>
    <property type="match status" value="1"/>
</dbReference>
<dbReference type="PANTHER" id="PTHR21110:SF0">
    <property type="entry name" value="PHOSPHOPENTOMUTASE"/>
    <property type="match status" value="1"/>
</dbReference>
<dbReference type="Pfam" id="PF01676">
    <property type="entry name" value="Metalloenzyme"/>
    <property type="match status" value="1"/>
</dbReference>
<dbReference type="PIRSF" id="PIRSF001491">
    <property type="entry name" value="Ppentomutase"/>
    <property type="match status" value="1"/>
</dbReference>
<dbReference type="SUPFAM" id="SSF53649">
    <property type="entry name" value="Alkaline phosphatase-like"/>
    <property type="match status" value="1"/>
</dbReference>
<dbReference type="SUPFAM" id="SSF143856">
    <property type="entry name" value="DeoB insert domain-like"/>
    <property type="match status" value="1"/>
</dbReference>
<sequence>MNKYKRIFLVVMDSVGIGEAPDAEQFGDLGSDTIGHIAEHMNGLQMPNMVKLGLGNIREMKGISKVEKPLGYYTKMQEKSTGKDTMTGHWEIMGLYIDTPFQVFPEGFPKELLDELEEKTGRKIIGNKPASGTEILDELGQEQMETGSLIVYTSADSVLQIAAHEEVVPLDELYKICKIARELTLDEKYMVGRVIARPFVGEPGNFTRTPNRHDYALKPFGRTVMNELKDSDYDVIAIGKISDIYDGEGVTESLRTKSNMDGMDKLVDTLNMDFTGLSFLNLVDFDALFGHRRDPQGYGEALQEYDARLPEVFEKLKEDDLLLITADHGNDPVHHGTDHTREYVPLLAYSPSMKEGGQELPLRQTFADIGATVAENFGVKMPEYGTSFLNELKK</sequence>
<organism>
    <name type="scientific">Bacillus cereus (strain ZK / E33L)</name>
    <dbReference type="NCBI Taxonomy" id="288681"/>
    <lineage>
        <taxon>Bacteria</taxon>
        <taxon>Bacillati</taxon>
        <taxon>Bacillota</taxon>
        <taxon>Bacilli</taxon>
        <taxon>Bacillales</taxon>
        <taxon>Bacillaceae</taxon>
        <taxon>Bacillus</taxon>
        <taxon>Bacillus cereus group</taxon>
    </lineage>
</organism>
<comment type="function">
    <text evidence="1">Isomerase that catalyzes the conversion of deoxy-ribose 1-phosphate (dRib-1-P) and ribose 1-phosphate (Rib-1-P) to deoxy-ribose 5-phosphate (dRib-5-P) and ribose 5-phosphate (Rib-5-P), respectively.</text>
</comment>
<comment type="catalytic activity">
    <reaction evidence="1">
        <text>2-deoxy-alpha-D-ribose 1-phosphate = 2-deoxy-D-ribose 5-phosphate</text>
        <dbReference type="Rhea" id="RHEA:27658"/>
        <dbReference type="ChEBI" id="CHEBI:57259"/>
        <dbReference type="ChEBI" id="CHEBI:62877"/>
        <dbReference type="EC" id="5.4.2.7"/>
    </reaction>
</comment>
<comment type="catalytic activity">
    <reaction evidence="1">
        <text>alpha-D-ribose 1-phosphate = D-ribose 5-phosphate</text>
        <dbReference type="Rhea" id="RHEA:18793"/>
        <dbReference type="ChEBI" id="CHEBI:57720"/>
        <dbReference type="ChEBI" id="CHEBI:78346"/>
        <dbReference type="EC" id="5.4.2.7"/>
    </reaction>
</comment>
<comment type="cofactor">
    <cofactor evidence="1">
        <name>Mn(2+)</name>
        <dbReference type="ChEBI" id="CHEBI:29035"/>
    </cofactor>
    <text evidence="1">Binds 2 manganese ions.</text>
</comment>
<comment type="pathway">
    <text evidence="1">Carbohydrate degradation; 2-deoxy-D-ribose 1-phosphate degradation; D-glyceraldehyde 3-phosphate and acetaldehyde from 2-deoxy-alpha-D-ribose 1-phosphate: step 1/2.</text>
</comment>
<comment type="subcellular location">
    <subcellularLocation>
        <location evidence="1">Cytoplasm</location>
    </subcellularLocation>
</comment>
<comment type="similarity">
    <text evidence="1">Belongs to the phosphopentomutase family.</text>
</comment>
<proteinExistence type="inferred from homology"/>